<accession>Q503V9</accession>
<organism>
    <name type="scientific">Danio rerio</name>
    <name type="common">Zebrafish</name>
    <name type="synonym">Brachydanio rerio</name>
    <dbReference type="NCBI Taxonomy" id="7955"/>
    <lineage>
        <taxon>Eukaryota</taxon>
        <taxon>Metazoa</taxon>
        <taxon>Chordata</taxon>
        <taxon>Craniata</taxon>
        <taxon>Vertebrata</taxon>
        <taxon>Euteleostomi</taxon>
        <taxon>Actinopterygii</taxon>
        <taxon>Neopterygii</taxon>
        <taxon>Teleostei</taxon>
        <taxon>Ostariophysi</taxon>
        <taxon>Cypriniformes</taxon>
        <taxon>Danionidae</taxon>
        <taxon>Danioninae</taxon>
        <taxon>Danio</taxon>
    </lineage>
</organism>
<sequence length="282" mass="32286">MTEGDRELSALIQELWDNDTNRLRPGIDYRISLQGKAGDLAGVPDDSDGAGMPLFSFVDENIFKKETFLAFISLLDNYESDTGEPEIVTPEEEMENHRFLDSVIKTPTMKIAHKYLVEKRLSPEDTTGFKQQLYKIWFELYARKGSSKPDSSGFEHVFVGETRGGHTVIGFHNWIQLYLQEKLGHIDYKGYSVNANSPQPDENKHMLALQFSWKNGIKPKGSIFIGVSPEFEFSLYTLCFLMSPNERVKVSFNLYDVEIVCHHYNQKHIGTTYPVPVKYLNV</sequence>
<keyword id="KW-0255">Endonuclease</keyword>
<keyword id="KW-0378">Hydrolase</keyword>
<keyword id="KW-0456">Lyase</keyword>
<keyword id="KW-0464">Manganese</keyword>
<keyword id="KW-0479">Metal-binding</keyword>
<keyword id="KW-0540">Nuclease</keyword>
<keyword id="KW-1185">Reference proteome</keyword>
<keyword id="KW-0694">RNA-binding</keyword>
<comment type="function">
    <text evidence="2">Endoribonuclease that cleaves single-stranded RNAs at 5' of uridylates and releases a product with a 2',3'-cyclic phosphate at the 3'-end. The UU and GU sites are more efficiently cleaved than CU and AU sites.</text>
</comment>
<comment type="catalytic activity">
    <reaction evidence="2">
        <text>ribonucleotidyl-uridine-RNA = a 5'-end dephospho-uridine-RNA + a 3'-end 2',3'-cyclophospho-ribonucleotide-RNA</text>
        <dbReference type="Rhea" id="RHEA:67792"/>
        <dbReference type="Rhea" id="RHEA-COMP:10464"/>
        <dbReference type="Rhea" id="RHEA-COMP:17354"/>
        <dbReference type="Rhea" id="RHEA-COMP:17356"/>
        <dbReference type="ChEBI" id="CHEBI:83064"/>
        <dbReference type="ChEBI" id="CHEBI:173117"/>
        <dbReference type="ChEBI" id="CHEBI:173224"/>
    </reaction>
    <physiologicalReaction direction="left-to-right" evidence="2">
        <dbReference type="Rhea" id="RHEA:67793"/>
    </physiologicalReaction>
</comment>
<comment type="cofactor">
    <cofactor evidence="1">
        <name>Mn(2+)</name>
        <dbReference type="ChEBI" id="CHEBI:29035"/>
    </cofactor>
</comment>
<comment type="subunit">
    <text evidence="1">Monomer.</text>
</comment>
<comment type="similarity">
    <text evidence="4">Belongs to the ENDOU family.</text>
</comment>
<dbReference type="EC" id="4.6.1.-" evidence="2"/>
<dbReference type="EMBL" id="BC095160">
    <property type="protein sequence ID" value="AAH95160.1"/>
    <property type="molecule type" value="mRNA"/>
</dbReference>
<dbReference type="RefSeq" id="NP_001018398.1">
    <property type="nucleotide sequence ID" value="NM_001020562.1"/>
</dbReference>
<dbReference type="SMR" id="Q503V9"/>
<dbReference type="FunCoup" id="Q503V9">
    <property type="interactions" value="2"/>
</dbReference>
<dbReference type="STRING" id="7955.ENSDARP00000005740"/>
<dbReference type="PaxDb" id="7955-ENSDARP00000005740"/>
<dbReference type="GeneID" id="553584"/>
<dbReference type="KEGG" id="dre:553584"/>
<dbReference type="AGR" id="ZFIN:ZDB-GENE-050522-373"/>
<dbReference type="CTD" id="553584"/>
<dbReference type="ZFIN" id="ZDB-GENE-050522-373">
    <property type="gene designation" value="endou2"/>
</dbReference>
<dbReference type="eggNOG" id="KOG2849">
    <property type="taxonomic scope" value="Eukaryota"/>
</dbReference>
<dbReference type="InParanoid" id="Q503V9"/>
<dbReference type="OrthoDB" id="430326at2759"/>
<dbReference type="PhylomeDB" id="Q503V9"/>
<dbReference type="PRO" id="PR:Q503V9"/>
<dbReference type="Proteomes" id="UP000000437">
    <property type="component" value="Chromosome 21"/>
</dbReference>
<dbReference type="GO" id="GO:0016829">
    <property type="term" value="F:lyase activity"/>
    <property type="evidence" value="ECO:0007669"/>
    <property type="project" value="UniProtKB-KW"/>
</dbReference>
<dbReference type="GO" id="GO:0046872">
    <property type="term" value="F:metal ion binding"/>
    <property type="evidence" value="ECO:0007669"/>
    <property type="project" value="UniProtKB-KW"/>
</dbReference>
<dbReference type="GO" id="GO:0003723">
    <property type="term" value="F:RNA binding"/>
    <property type="evidence" value="ECO:0000250"/>
    <property type="project" value="UniProtKB"/>
</dbReference>
<dbReference type="GO" id="GO:0004521">
    <property type="term" value="F:RNA endonuclease activity"/>
    <property type="evidence" value="ECO:0000250"/>
    <property type="project" value="UniProtKB"/>
</dbReference>
<dbReference type="CDD" id="cd21159">
    <property type="entry name" value="XendoU"/>
    <property type="match status" value="1"/>
</dbReference>
<dbReference type="InterPro" id="IPR039787">
    <property type="entry name" value="ENDOU"/>
</dbReference>
<dbReference type="InterPro" id="IPR037227">
    <property type="entry name" value="EndoU-like"/>
</dbReference>
<dbReference type="InterPro" id="IPR018998">
    <property type="entry name" value="EndoU_C"/>
</dbReference>
<dbReference type="PANTHER" id="PTHR12439">
    <property type="entry name" value="PLACENTAL PROTEIN 11-RELATED"/>
    <property type="match status" value="1"/>
</dbReference>
<dbReference type="PANTHER" id="PTHR12439:SF32">
    <property type="entry name" value="URIDYLATE-SPECIFIC ENDORIBONUCLEASE B"/>
    <property type="match status" value="1"/>
</dbReference>
<dbReference type="Pfam" id="PF09412">
    <property type="entry name" value="XendoU"/>
    <property type="match status" value="1"/>
</dbReference>
<dbReference type="SUPFAM" id="SSF142877">
    <property type="entry name" value="EndoU-like"/>
    <property type="match status" value="1"/>
</dbReference>
<dbReference type="PROSITE" id="PS51959">
    <property type="entry name" value="ENDOU"/>
    <property type="match status" value="1"/>
</dbReference>
<reference key="1">
    <citation type="submission" date="2005-05" db="EMBL/GenBank/DDBJ databases">
        <authorList>
            <consortium name="NIH - Zebrafish Gene Collection (ZGC) project"/>
        </authorList>
    </citation>
    <scope>NUCLEOTIDE SEQUENCE [LARGE SCALE MRNA]</scope>
    <source>
        <tissue>Eye</tissue>
    </source>
</reference>
<feature type="chain" id="PRO_0000394224" description="Uridylate-specific endoribonuclease B">
    <location>
        <begin position="1"/>
        <end position="282"/>
    </location>
</feature>
<feature type="domain" description="EndoU" evidence="3">
    <location>
        <begin position="4"/>
        <end position="278"/>
    </location>
</feature>
<feature type="active site" evidence="3">
    <location>
        <position position="156"/>
    </location>
</feature>
<feature type="active site" evidence="3">
    <location>
        <position position="172"/>
    </location>
</feature>
<feature type="active site" evidence="3">
    <location>
        <position position="218"/>
    </location>
</feature>
<name>ENDUB_DANRE</name>
<proteinExistence type="evidence at transcript level"/>
<protein>
    <recommendedName>
        <fullName evidence="4">Uridylate-specific endoribonuclease B</fullName>
        <ecNumber evidence="2">4.6.1.-</ecNumber>
    </recommendedName>
    <alternativeName>
        <fullName>Protein endoU-B</fullName>
    </alternativeName>
</protein>
<gene>
    <name type="primary">endoub</name>
    <name type="ORF">zgc:110053</name>
</gene>
<evidence type="ECO:0000250" key="1"/>
<evidence type="ECO:0000250" key="2">
    <source>
        <dbReference type="UniProtKB" id="P21128"/>
    </source>
</evidence>
<evidence type="ECO:0000255" key="3">
    <source>
        <dbReference type="PROSITE-ProRule" id="PRU01304"/>
    </source>
</evidence>
<evidence type="ECO:0000305" key="4"/>